<dbReference type="EC" id="1.4.99.-" evidence="1"/>
<dbReference type="EMBL" id="CP000570">
    <property type="protein sequence ID" value="ABN85238.1"/>
    <property type="molecule type" value="Genomic_DNA"/>
</dbReference>
<dbReference type="RefSeq" id="WP_004189387.1">
    <property type="nucleotide sequence ID" value="NC_009074.1"/>
</dbReference>
<dbReference type="SMR" id="A3NC12"/>
<dbReference type="KEGG" id="bpd:BURPS668_2864"/>
<dbReference type="HOGENOM" id="CLU_007884_9_2_4"/>
<dbReference type="UniPathway" id="UPA00043">
    <property type="reaction ID" value="UER00498"/>
</dbReference>
<dbReference type="GO" id="GO:0005737">
    <property type="term" value="C:cytoplasm"/>
    <property type="evidence" value="ECO:0007669"/>
    <property type="project" value="TreeGrafter"/>
</dbReference>
<dbReference type="GO" id="GO:0005886">
    <property type="term" value="C:plasma membrane"/>
    <property type="evidence" value="ECO:0007669"/>
    <property type="project" value="TreeGrafter"/>
</dbReference>
<dbReference type="GO" id="GO:0008718">
    <property type="term" value="F:D-amino-acid dehydrogenase activity"/>
    <property type="evidence" value="ECO:0007669"/>
    <property type="project" value="UniProtKB-UniRule"/>
</dbReference>
<dbReference type="GO" id="GO:0055130">
    <property type="term" value="P:D-alanine catabolic process"/>
    <property type="evidence" value="ECO:0007669"/>
    <property type="project" value="UniProtKB-UniPathway"/>
</dbReference>
<dbReference type="FunFam" id="3.50.50.60:FF:000020">
    <property type="entry name" value="D-amino acid dehydrogenase"/>
    <property type="match status" value="1"/>
</dbReference>
<dbReference type="Gene3D" id="3.30.9.10">
    <property type="entry name" value="D-Amino Acid Oxidase, subunit A, domain 2"/>
    <property type="match status" value="1"/>
</dbReference>
<dbReference type="Gene3D" id="3.50.50.60">
    <property type="entry name" value="FAD/NAD(P)-binding domain"/>
    <property type="match status" value="2"/>
</dbReference>
<dbReference type="HAMAP" id="MF_01202">
    <property type="entry name" value="DadA"/>
    <property type="match status" value="1"/>
</dbReference>
<dbReference type="InterPro" id="IPR023080">
    <property type="entry name" value="DadA"/>
</dbReference>
<dbReference type="InterPro" id="IPR006076">
    <property type="entry name" value="FAD-dep_OxRdtase"/>
</dbReference>
<dbReference type="InterPro" id="IPR036188">
    <property type="entry name" value="FAD/NAD-bd_sf"/>
</dbReference>
<dbReference type="NCBIfam" id="NF001933">
    <property type="entry name" value="PRK00711.1"/>
    <property type="match status" value="1"/>
</dbReference>
<dbReference type="PANTHER" id="PTHR13847:SF280">
    <property type="entry name" value="D-AMINO ACID DEHYDROGENASE"/>
    <property type="match status" value="1"/>
</dbReference>
<dbReference type="PANTHER" id="PTHR13847">
    <property type="entry name" value="SARCOSINE DEHYDROGENASE-RELATED"/>
    <property type="match status" value="1"/>
</dbReference>
<dbReference type="Pfam" id="PF01266">
    <property type="entry name" value="DAO"/>
    <property type="match status" value="1"/>
</dbReference>
<dbReference type="SUPFAM" id="SSF54373">
    <property type="entry name" value="FAD-linked reductases, C-terminal domain"/>
    <property type="match status" value="1"/>
</dbReference>
<dbReference type="SUPFAM" id="SSF51905">
    <property type="entry name" value="FAD/NAD(P)-binding domain"/>
    <property type="match status" value="1"/>
</dbReference>
<keyword id="KW-0274">FAD</keyword>
<keyword id="KW-0285">Flavoprotein</keyword>
<keyword id="KW-0560">Oxidoreductase</keyword>
<reference key="1">
    <citation type="journal article" date="2010" name="Genome Biol. Evol.">
        <title>Continuing evolution of Burkholderia mallei through genome reduction and large-scale rearrangements.</title>
        <authorList>
            <person name="Losada L."/>
            <person name="Ronning C.M."/>
            <person name="DeShazer D."/>
            <person name="Woods D."/>
            <person name="Fedorova N."/>
            <person name="Kim H.S."/>
            <person name="Shabalina S.A."/>
            <person name="Pearson T.R."/>
            <person name="Brinkac L."/>
            <person name="Tan P."/>
            <person name="Nandi T."/>
            <person name="Crabtree J."/>
            <person name="Badger J."/>
            <person name="Beckstrom-Sternberg S."/>
            <person name="Saqib M."/>
            <person name="Schutzer S.E."/>
            <person name="Keim P."/>
            <person name="Nierman W.C."/>
        </authorList>
    </citation>
    <scope>NUCLEOTIDE SEQUENCE [LARGE SCALE GENOMIC DNA]</scope>
    <source>
        <strain>668</strain>
    </source>
</reference>
<proteinExistence type="inferred from homology"/>
<accession>A3NC12</accession>
<sequence length="428" mass="46175">MRVVILGSGVVGVASAYYLARAGHEVTVIDREAGPALDTSFANAGQISPGYAAPWAAPGVPLKAVKWMFEKHAPLAIRLDGTRFQLQWMWQMLRNCTTERYALNKGRMVRLAEYSRDCLQALRAETAIQYEGRTGGTLQVFRTQQQLDGAAKDIAVLREANVPFELLSSDELKKAEPALAAVSHKLTGGLRLPGDETGDCQLFTTRLAALAEQLGVKFRFNTRIDALAVAGGKIAGVQCGGEMVRADAYVVALGSYSTNLVASLVKIPVYPLKGYSITAPIVDAAKAPVSTVLDETYKIAITRFDDRIRVGGMAEIVGFDKRLRDARRGTLEMCVNDLFPGGGDTAKATFWTGLRPMTPDGTPIVGRTPVPNLFLNTGHGTLGWTMSCGSGQLLADLMSGKKPAIRADDLSVHRYLSETDGEHRPAYA</sequence>
<gene>
    <name evidence="1" type="primary">dadA</name>
    <name type="ordered locus">BURPS668_2864</name>
</gene>
<organism>
    <name type="scientific">Burkholderia pseudomallei (strain 668)</name>
    <dbReference type="NCBI Taxonomy" id="320373"/>
    <lineage>
        <taxon>Bacteria</taxon>
        <taxon>Pseudomonadati</taxon>
        <taxon>Pseudomonadota</taxon>
        <taxon>Betaproteobacteria</taxon>
        <taxon>Burkholderiales</taxon>
        <taxon>Burkholderiaceae</taxon>
        <taxon>Burkholderia</taxon>
        <taxon>pseudomallei group</taxon>
    </lineage>
</organism>
<name>DADA_BURP6</name>
<feature type="chain" id="PRO_1000066081" description="D-amino acid dehydrogenase">
    <location>
        <begin position="1"/>
        <end position="428"/>
    </location>
</feature>
<feature type="binding site" evidence="1">
    <location>
        <begin position="3"/>
        <end position="17"/>
    </location>
    <ligand>
        <name>FAD</name>
        <dbReference type="ChEBI" id="CHEBI:57692"/>
    </ligand>
</feature>
<protein>
    <recommendedName>
        <fullName evidence="1">D-amino acid dehydrogenase</fullName>
        <ecNumber evidence="1">1.4.99.-</ecNumber>
    </recommendedName>
</protein>
<evidence type="ECO:0000255" key="1">
    <source>
        <dbReference type="HAMAP-Rule" id="MF_01202"/>
    </source>
</evidence>
<comment type="function">
    <text evidence="1">Oxidative deamination of D-amino acids.</text>
</comment>
<comment type="catalytic activity">
    <reaction evidence="1">
        <text>a D-alpha-amino acid + A + H2O = a 2-oxocarboxylate + AH2 + NH4(+)</text>
        <dbReference type="Rhea" id="RHEA:18125"/>
        <dbReference type="ChEBI" id="CHEBI:13193"/>
        <dbReference type="ChEBI" id="CHEBI:15377"/>
        <dbReference type="ChEBI" id="CHEBI:17499"/>
        <dbReference type="ChEBI" id="CHEBI:28938"/>
        <dbReference type="ChEBI" id="CHEBI:35179"/>
        <dbReference type="ChEBI" id="CHEBI:59871"/>
    </reaction>
</comment>
<comment type="cofactor">
    <cofactor evidence="1">
        <name>FAD</name>
        <dbReference type="ChEBI" id="CHEBI:57692"/>
    </cofactor>
</comment>
<comment type="pathway">
    <text>Amino-acid degradation; D-alanine degradation; NH(3) and pyruvate from D-alanine: step 1/1.</text>
</comment>
<comment type="similarity">
    <text evidence="1">Belongs to the DadA oxidoreductase family.</text>
</comment>